<dbReference type="EMBL" id="CP000671">
    <property type="protein sequence ID" value="ABQ99097.1"/>
    <property type="molecule type" value="Genomic_DNA"/>
</dbReference>
<dbReference type="SMR" id="A5UE96"/>
<dbReference type="KEGG" id="hip:CGSHiEE_09020"/>
<dbReference type="HOGENOM" id="CLU_092227_0_2_6"/>
<dbReference type="GO" id="GO:0015934">
    <property type="term" value="C:large ribosomal subunit"/>
    <property type="evidence" value="ECO:0007669"/>
    <property type="project" value="InterPro"/>
</dbReference>
<dbReference type="GO" id="GO:0070180">
    <property type="term" value="F:large ribosomal subunit rRNA binding"/>
    <property type="evidence" value="ECO:0007669"/>
    <property type="project" value="UniProtKB-UniRule"/>
</dbReference>
<dbReference type="GO" id="GO:0003735">
    <property type="term" value="F:structural constituent of ribosome"/>
    <property type="evidence" value="ECO:0007669"/>
    <property type="project" value="InterPro"/>
</dbReference>
<dbReference type="GO" id="GO:0006412">
    <property type="term" value="P:translation"/>
    <property type="evidence" value="ECO:0007669"/>
    <property type="project" value="UniProtKB-UniRule"/>
</dbReference>
<dbReference type="CDD" id="cd05797">
    <property type="entry name" value="Ribosomal_L10"/>
    <property type="match status" value="1"/>
</dbReference>
<dbReference type="FunFam" id="3.30.70.1730:FF:000001">
    <property type="entry name" value="50S ribosomal protein L10"/>
    <property type="match status" value="1"/>
</dbReference>
<dbReference type="Gene3D" id="3.30.70.1730">
    <property type="match status" value="1"/>
</dbReference>
<dbReference type="Gene3D" id="6.10.250.2350">
    <property type="match status" value="1"/>
</dbReference>
<dbReference type="HAMAP" id="MF_00362">
    <property type="entry name" value="Ribosomal_uL10"/>
    <property type="match status" value="1"/>
</dbReference>
<dbReference type="InterPro" id="IPR001790">
    <property type="entry name" value="Ribosomal_uL10"/>
</dbReference>
<dbReference type="InterPro" id="IPR043141">
    <property type="entry name" value="Ribosomal_uL10-like_sf"/>
</dbReference>
<dbReference type="InterPro" id="IPR022973">
    <property type="entry name" value="Ribosomal_uL10_bac"/>
</dbReference>
<dbReference type="InterPro" id="IPR047865">
    <property type="entry name" value="Ribosomal_uL10_bac_type"/>
</dbReference>
<dbReference type="InterPro" id="IPR002363">
    <property type="entry name" value="Ribosomal_uL10_CS_bac"/>
</dbReference>
<dbReference type="NCBIfam" id="NF000955">
    <property type="entry name" value="PRK00099.1-1"/>
    <property type="match status" value="1"/>
</dbReference>
<dbReference type="PANTHER" id="PTHR11560">
    <property type="entry name" value="39S RIBOSOMAL PROTEIN L10, MITOCHONDRIAL"/>
    <property type="match status" value="1"/>
</dbReference>
<dbReference type="Pfam" id="PF00466">
    <property type="entry name" value="Ribosomal_L10"/>
    <property type="match status" value="1"/>
</dbReference>
<dbReference type="SUPFAM" id="SSF160369">
    <property type="entry name" value="Ribosomal protein L10-like"/>
    <property type="match status" value="1"/>
</dbReference>
<dbReference type="PROSITE" id="PS01109">
    <property type="entry name" value="RIBOSOMAL_L10"/>
    <property type="match status" value="1"/>
</dbReference>
<proteinExistence type="inferred from homology"/>
<name>RL10_HAEIE</name>
<organism>
    <name type="scientific">Haemophilus influenzae (strain PittEE)</name>
    <dbReference type="NCBI Taxonomy" id="374930"/>
    <lineage>
        <taxon>Bacteria</taxon>
        <taxon>Pseudomonadati</taxon>
        <taxon>Pseudomonadota</taxon>
        <taxon>Gammaproteobacteria</taxon>
        <taxon>Pasteurellales</taxon>
        <taxon>Pasteurellaceae</taxon>
        <taxon>Haemophilus</taxon>
    </lineage>
</organism>
<reference key="1">
    <citation type="journal article" date="2007" name="Genome Biol.">
        <title>Characterization and modeling of the Haemophilus influenzae core and supragenomes based on the complete genomic sequences of Rd and 12 clinical nontypeable strains.</title>
        <authorList>
            <person name="Hogg J.S."/>
            <person name="Hu F.Z."/>
            <person name="Janto B."/>
            <person name="Boissy R."/>
            <person name="Hayes J."/>
            <person name="Keefe R."/>
            <person name="Post J.C."/>
            <person name="Ehrlich G.D."/>
        </authorList>
    </citation>
    <scope>NUCLEOTIDE SEQUENCE [LARGE SCALE GENOMIC DNA]</scope>
    <source>
        <strain>PittEE</strain>
    </source>
</reference>
<sequence length="163" mass="17678">MALNLQDKQAIVAEVNEAAKGALSAVIADSRGVTVEKMTELRKSAREAGVTMRVVRNTLLRRAVEGTDYECLKDTFVGPTLIAFSNEHPGAAARLFKEFAKANDKFEIKGAAFEGKIQDVEFLATLPTYEEAIARLMGTMKEAAAGKLARTFAALRDKLQEAA</sequence>
<evidence type="ECO:0000255" key="1">
    <source>
        <dbReference type="HAMAP-Rule" id="MF_00362"/>
    </source>
</evidence>
<evidence type="ECO:0000305" key="2"/>
<feature type="chain" id="PRO_1000005506" description="Large ribosomal subunit protein uL10">
    <location>
        <begin position="1"/>
        <end position="163"/>
    </location>
</feature>
<accession>A5UE96</accession>
<protein>
    <recommendedName>
        <fullName evidence="1">Large ribosomal subunit protein uL10</fullName>
    </recommendedName>
    <alternativeName>
        <fullName evidence="2">50S ribosomal protein L10</fullName>
    </alternativeName>
</protein>
<comment type="function">
    <text evidence="1">Forms part of the ribosomal stalk, playing a central role in the interaction of the ribosome with GTP-bound translation factors.</text>
</comment>
<comment type="subunit">
    <text evidence="1">Part of the ribosomal stalk of the 50S ribosomal subunit. The N-terminus interacts with L11 and the large rRNA to form the base of the stalk. The C-terminus forms an elongated spine to which L12 dimers bind in a sequential fashion forming a multimeric L10(L12)X complex.</text>
</comment>
<comment type="similarity">
    <text evidence="1">Belongs to the universal ribosomal protein uL10 family.</text>
</comment>
<keyword id="KW-0687">Ribonucleoprotein</keyword>
<keyword id="KW-0689">Ribosomal protein</keyword>
<keyword id="KW-0694">RNA-binding</keyword>
<keyword id="KW-0699">rRNA-binding</keyword>
<gene>
    <name evidence="1" type="primary">rplJ</name>
    <name type="ordered locus">CGSHiEE_09020</name>
</gene>